<accession>Q0S9W9</accession>
<comment type="catalytic activity">
    <reaction evidence="1">
        <text>(S)-4-hydroxy-2-oxopentanoate = acetaldehyde + pyruvate</text>
        <dbReference type="Rhea" id="RHEA:22624"/>
        <dbReference type="ChEBI" id="CHEBI:15343"/>
        <dbReference type="ChEBI" id="CHEBI:15361"/>
        <dbReference type="ChEBI" id="CHEBI:73143"/>
        <dbReference type="EC" id="4.1.3.39"/>
    </reaction>
</comment>
<comment type="similarity">
    <text evidence="1">Belongs to the 4-hydroxy-2-oxovalerate aldolase family.</text>
</comment>
<proteinExistence type="inferred from homology"/>
<feature type="chain" id="PRO_0000387906" description="4-hydroxy-2-oxovalerate aldolase 2">
    <location>
        <begin position="1"/>
        <end position="343"/>
    </location>
</feature>
<feature type="domain" description="Pyruvate carboxyltransferase" evidence="1">
    <location>
        <begin position="5"/>
        <end position="255"/>
    </location>
</feature>
<feature type="binding site" evidence="1">
    <location>
        <begin position="13"/>
        <end position="14"/>
    </location>
    <ligand>
        <name>substrate</name>
    </ligand>
</feature>
<feature type="binding site" evidence="1">
    <location>
        <position position="14"/>
    </location>
    <ligand>
        <name>Mn(2+)</name>
        <dbReference type="ChEBI" id="CHEBI:29035"/>
    </ligand>
</feature>
<feature type="binding site" evidence="1">
    <location>
        <position position="167"/>
    </location>
    <ligand>
        <name>substrate</name>
    </ligand>
</feature>
<feature type="binding site" evidence="1">
    <location>
        <position position="194"/>
    </location>
    <ligand>
        <name>Mn(2+)</name>
        <dbReference type="ChEBI" id="CHEBI:29035"/>
    </ligand>
</feature>
<feature type="binding site" evidence="1">
    <location>
        <position position="194"/>
    </location>
    <ligand>
        <name>substrate</name>
    </ligand>
</feature>
<feature type="binding site" evidence="1">
    <location>
        <position position="196"/>
    </location>
    <ligand>
        <name>Mn(2+)</name>
        <dbReference type="ChEBI" id="CHEBI:29035"/>
    </ligand>
</feature>
<feature type="binding site" evidence="1">
    <location>
        <position position="285"/>
    </location>
    <ligand>
        <name>substrate</name>
    </ligand>
</feature>
<feature type="site" description="Transition state stabilizer" evidence="1">
    <location>
        <position position="13"/>
    </location>
</feature>
<evidence type="ECO:0000255" key="1">
    <source>
        <dbReference type="HAMAP-Rule" id="MF_01656"/>
    </source>
</evidence>
<name>HOA2_RHOJR</name>
<protein>
    <recommendedName>
        <fullName evidence="1">4-hydroxy-2-oxovalerate aldolase 2</fullName>
        <shortName evidence="1">HOA 2</shortName>
        <ecNumber evidence="1">4.1.3.39</ecNumber>
    </recommendedName>
    <alternativeName>
        <fullName evidence="1">4-hydroxy-2-keto-pentanoic acid aldolase 2</fullName>
    </alternativeName>
    <alternativeName>
        <fullName evidence="1">4-hydroxy-2-oxopentanoate aldolase 2</fullName>
    </alternativeName>
</protein>
<sequence length="343" mass="35899">MSKKITIVDTTLRDGMSSVSHQFTPQNVADIARGLDKAGVPTIEVAHGIGLGASSIQYGFAAATDPDYVRAAVDAVENADIAALYVPGIATLAELQQAIDAGIKTVRVAVHCTEADCGQQPVEWAKEHGLTVMTFLMMSHKLDPQPLAEQAAKLDSYGADVVYVVDSAGAMVPRHAGERVAALRQAITADIGFHAHNNLGVGIANALTAAENGATFIDGSLRGLGASAGNAQTEVLAAAFERAGWDTGVDLFPLIDTAEHVVAPLMKEPQIVDETALVLGYAGVYSTFFHPTKRAAKKFGVPARDILMELGRRGVIGGQEDMIIDVASELAGRTYETPAPAGV</sequence>
<organism>
    <name type="scientific">Rhodococcus jostii (strain RHA1)</name>
    <dbReference type="NCBI Taxonomy" id="101510"/>
    <lineage>
        <taxon>Bacteria</taxon>
        <taxon>Bacillati</taxon>
        <taxon>Actinomycetota</taxon>
        <taxon>Actinomycetes</taxon>
        <taxon>Mycobacteriales</taxon>
        <taxon>Nocardiaceae</taxon>
        <taxon>Rhodococcus</taxon>
    </lineage>
</organism>
<keyword id="KW-0058">Aromatic hydrocarbons catabolism</keyword>
<keyword id="KW-0456">Lyase</keyword>
<keyword id="KW-0464">Manganese</keyword>
<keyword id="KW-0479">Metal-binding</keyword>
<gene>
    <name type="ordered locus">RHA1_ro03867</name>
</gene>
<dbReference type="EC" id="4.1.3.39" evidence="1"/>
<dbReference type="EMBL" id="CP000431">
    <property type="protein sequence ID" value="ABG95667.1"/>
    <property type="molecule type" value="Genomic_DNA"/>
</dbReference>
<dbReference type="RefSeq" id="WP_011596411.1">
    <property type="nucleotide sequence ID" value="NC_008268.1"/>
</dbReference>
<dbReference type="SMR" id="Q0S9W9"/>
<dbReference type="KEGG" id="rha:RHA1_ro03867"/>
<dbReference type="PATRIC" id="fig|101510.16.peg.3894"/>
<dbReference type="eggNOG" id="COG0119">
    <property type="taxonomic scope" value="Bacteria"/>
</dbReference>
<dbReference type="HOGENOM" id="CLU_049173_0_0_11"/>
<dbReference type="OrthoDB" id="9803573at2"/>
<dbReference type="Proteomes" id="UP000008710">
    <property type="component" value="Chromosome"/>
</dbReference>
<dbReference type="GO" id="GO:0003852">
    <property type="term" value="F:2-isopropylmalate synthase activity"/>
    <property type="evidence" value="ECO:0007669"/>
    <property type="project" value="TreeGrafter"/>
</dbReference>
<dbReference type="GO" id="GO:0008701">
    <property type="term" value="F:4-hydroxy-2-oxovalerate aldolase activity"/>
    <property type="evidence" value="ECO:0007669"/>
    <property type="project" value="UniProtKB-UniRule"/>
</dbReference>
<dbReference type="GO" id="GO:0030145">
    <property type="term" value="F:manganese ion binding"/>
    <property type="evidence" value="ECO:0007669"/>
    <property type="project" value="UniProtKB-UniRule"/>
</dbReference>
<dbReference type="GO" id="GO:0009056">
    <property type="term" value="P:catabolic process"/>
    <property type="evidence" value="ECO:0007669"/>
    <property type="project" value="UniProtKB-KW"/>
</dbReference>
<dbReference type="GO" id="GO:0009098">
    <property type="term" value="P:L-leucine biosynthetic process"/>
    <property type="evidence" value="ECO:0007669"/>
    <property type="project" value="TreeGrafter"/>
</dbReference>
<dbReference type="CDD" id="cd07943">
    <property type="entry name" value="DRE_TIM_HOA"/>
    <property type="match status" value="1"/>
</dbReference>
<dbReference type="Gene3D" id="1.10.8.60">
    <property type="match status" value="1"/>
</dbReference>
<dbReference type="Gene3D" id="3.20.20.70">
    <property type="entry name" value="Aldolase class I"/>
    <property type="match status" value="1"/>
</dbReference>
<dbReference type="HAMAP" id="MF_01656">
    <property type="entry name" value="HOA"/>
    <property type="match status" value="1"/>
</dbReference>
<dbReference type="InterPro" id="IPR050073">
    <property type="entry name" value="2-IPM_HCS-like"/>
</dbReference>
<dbReference type="InterPro" id="IPR017629">
    <property type="entry name" value="4OH_2_O-val_aldolase"/>
</dbReference>
<dbReference type="InterPro" id="IPR013785">
    <property type="entry name" value="Aldolase_TIM"/>
</dbReference>
<dbReference type="InterPro" id="IPR012425">
    <property type="entry name" value="DmpG_comm"/>
</dbReference>
<dbReference type="InterPro" id="IPR035685">
    <property type="entry name" value="DRE_TIM_HOA"/>
</dbReference>
<dbReference type="InterPro" id="IPR000891">
    <property type="entry name" value="PYR_CT"/>
</dbReference>
<dbReference type="NCBIfam" id="TIGR03217">
    <property type="entry name" value="4OH_2_O_val_ald"/>
    <property type="match status" value="1"/>
</dbReference>
<dbReference type="NCBIfam" id="NF006049">
    <property type="entry name" value="PRK08195.1"/>
    <property type="match status" value="1"/>
</dbReference>
<dbReference type="PANTHER" id="PTHR10277:SF9">
    <property type="entry name" value="2-ISOPROPYLMALATE SYNTHASE 1, CHLOROPLASTIC-RELATED"/>
    <property type="match status" value="1"/>
</dbReference>
<dbReference type="PANTHER" id="PTHR10277">
    <property type="entry name" value="HOMOCITRATE SYNTHASE-RELATED"/>
    <property type="match status" value="1"/>
</dbReference>
<dbReference type="Pfam" id="PF07836">
    <property type="entry name" value="DmpG_comm"/>
    <property type="match status" value="1"/>
</dbReference>
<dbReference type="Pfam" id="PF00682">
    <property type="entry name" value="HMGL-like"/>
    <property type="match status" value="1"/>
</dbReference>
<dbReference type="SUPFAM" id="SSF51569">
    <property type="entry name" value="Aldolase"/>
    <property type="match status" value="1"/>
</dbReference>
<dbReference type="SUPFAM" id="SSF89000">
    <property type="entry name" value="post-HMGL domain-like"/>
    <property type="match status" value="1"/>
</dbReference>
<dbReference type="PROSITE" id="PS50991">
    <property type="entry name" value="PYR_CT"/>
    <property type="match status" value="1"/>
</dbReference>
<reference key="1">
    <citation type="journal article" date="2006" name="Proc. Natl. Acad. Sci. U.S.A.">
        <title>The complete genome of Rhodococcus sp. RHA1 provides insights into a catabolic powerhouse.</title>
        <authorList>
            <person name="McLeod M.P."/>
            <person name="Warren R.L."/>
            <person name="Hsiao W.W.L."/>
            <person name="Araki N."/>
            <person name="Myhre M."/>
            <person name="Fernandes C."/>
            <person name="Miyazawa D."/>
            <person name="Wong W."/>
            <person name="Lillquist A.L."/>
            <person name="Wang D."/>
            <person name="Dosanjh M."/>
            <person name="Hara H."/>
            <person name="Petrescu A."/>
            <person name="Morin R.D."/>
            <person name="Yang G."/>
            <person name="Stott J.M."/>
            <person name="Schein J.E."/>
            <person name="Shin H."/>
            <person name="Smailus D."/>
            <person name="Siddiqui A.S."/>
            <person name="Marra M.A."/>
            <person name="Jones S.J.M."/>
            <person name="Holt R."/>
            <person name="Brinkman F.S.L."/>
            <person name="Miyauchi K."/>
            <person name="Fukuda M."/>
            <person name="Davies J.E."/>
            <person name="Mohn W.W."/>
            <person name="Eltis L.D."/>
        </authorList>
    </citation>
    <scope>NUCLEOTIDE SEQUENCE [LARGE SCALE GENOMIC DNA]</scope>
    <source>
        <strain>RHA1</strain>
    </source>
</reference>